<comment type="function">
    <text evidence="4 6 7 8 9">Effector proteins function to alter host cell physiology and promote bacterial survival in host tissues (PubMed:10564523, PubMed:16611232, PubMed:18005683, PubMed:24248594). This protein is an E3 ubiquitin-protein ligase that interferes with the host's ubiquitination pathway and targets host proteins for proteasomal degradation (PubMed:10564523, PubMed:16611232, PubMed:18005683, PubMed:24248594). Can ubiquitinate ubiquitin, giving rise to polyubiquitin chains (in vitro) (PubMed:18005683). Polyubiquitinates host PKN1, leading to its proteasomal degradation (PubMed:16611232, PubMed:24248594). Down-modulates production of host pro-inflammatory cytokines by inhibiting NF-kappa-B-dependent gene expression; this depends only partially on its E3 ubiquitin-protein ligase activity (PubMed:12819095).</text>
</comment>
<comment type="catalytic activity">
    <reaction evidence="8">
        <text>S-ubiquitinyl-[E2 ubiquitin-conjugating enzyme]-L-cysteine + [acceptor protein]-L-lysine = [E2 ubiquitin-conjugating enzyme]-L-cysteine + N(6)-ubiquitinyl-[acceptor protein]-L-lysine.</text>
        <dbReference type="EC" id="2.3.2.27"/>
    </reaction>
</comment>
<comment type="activity regulation">
    <text evidence="9">Exists in an autoinhibited state in the absence of substrate protein, due to interactions of the leucine-rich repeat domain with the catalytic domain. Is activated upon binding to a substrate protein.</text>
</comment>
<comment type="subunit">
    <text evidence="7 9">Interacts (via leucine-rich repeat region) with host PKN1 (via the second REM repeat).</text>
</comment>
<comment type="subcellular location">
    <subcellularLocation>
        <location evidence="4 5">Secreted</location>
    </subcellularLocation>
    <subcellularLocation>
        <location evidence="4 5">Host cytoplasm</location>
    </subcellularLocation>
    <subcellularLocation>
        <location evidence="7">Host nucleus</location>
    </subcellularLocation>
    <text evidence="4 5">Secreted via type III secretion systems 1 and 2 (SPI-1 and SPI-2 T3SS), and delivered into the host cytoplasm. Localizes predominantly to the host nucleus.</text>
</comment>
<comment type="induction">
    <text evidence="4">Transcription is maximal in the late logarithmic phase of growth. Expression levels are similar in the intracellular and extracellular environments.</text>
</comment>
<comment type="domain">
    <text evidence="7 9">The LRR (leucine-rich repeat) domain mediates interaction with host PKN1 and inhibition of NF-kappa-B-dependent gene expression.</text>
</comment>
<comment type="PTM">
    <text evidence="2">Ubiquitinated in the presence of host E1 ubiquitin-activating enzyme, E2 ubiquitin-conjugating enzyme and ubiquitin.</text>
</comment>
<comment type="similarity">
    <text evidence="3 10">Belongs to the LRR-containing bacterial E3 ligase family.</text>
</comment>
<protein>
    <recommendedName>
        <fullName>E3 ubiquitin-protein ligase SspH1</fullName>
        <ecNumber evidence="9">2.3.2.27</ecNumber>
    </recommendedName>
    <alternativeName>
        <fullName evidence="10">RING-type E3 ubiquitin transferase SspH1</fullName>
    </alternativeName>
    <alternativeName>
        <fullName>Salmonella secreted protein H1</fullName>
    </alternativeName>
    <alternativeName>
        <fullName>Secreted effector protein SspH1</fullName>
    </alternativeName>
</protein>
<accession>D0ZVG2</accession>
<accession>Q9XDN9</accession>
<proteinExistence type="evidence at protein level"/>
<reference key="1">
    <citation type="journal article" date="1999" name="Mol. Microbiol.">
        <title>Salmonella typhimurium leucine-rich repeat proteins are targeted to the SPI1 and SPI2 type III secretion systems.</title>
        <authorList>
            <person name="Miao E.A."/>
            <person name="Scherer C.A."/>
            <person name="Tsolis R.M."/>
            <person name="Kingsley R.A."/>
            <person name="Adams L.G."/>
            <person name="Baumler A.J."/>
            <person name="Miller S.I."/>
        </authorList>
    </citation>
    <scope>NUCLEOTIDE SEQUENCE [GENOMIC DNA]</scope>
    <scope>FUNCTION</scope>
    <scope>SUBCELLULAR LOCATION</scope>
    <scope>SECRETION VIA TYPE III SECRETION SYSTEM</scope>
    <scope>INDUCTION</scope>
</reference>
<reference key="2">
    <citation type="journal article" date="2010" name="J. Bacteriol.">
        <title>Short-term signatures of evolutionary change in the Salmonella enterica serovar typhimurium 14028 genome.</title>
        <authorList>
            <person name="Jarvik T."/>
            <person name="Smillie C."/>
            <person name="Groisman E.A."/>
            <person name="Ochman H."/>
        </authorList>
    </citation>
    <scope>NUCLEOTIDE SEQUENCE [LARGE SCALE GENOMIC DNA]</scope>
    <source>
        <strain>14028s / SGSC 2262</strain>
    </source>
</reference>
<reference key="3">
    <citation type="journal article" date="2000" name="Proc. Natl. Acad. Sci. U.S.A.">
        <title>A conserved amino acid sequence directing intracellular type III secretion by Salmonella typhimurium.</title>
        <authorList>
            <person name="Miao E.A."/>
            <person name="Miller S.I."/>
        </authorList>
    </citation>
    <scope>SUBCELLULAR LOCATION</scope>
    <scope>SECRETION VIA TYPE III SECRETION SYSTEM</scope>
</reference>
<reference key="4">
    <citation type="journal article" date="2003" name="Infect. Immun.">
        <title>A Salmonella enterica serovar typhimurium translocated leucine-rich repeat effector protein inhibits NF-kappa B-dependent gene expression.</title>
        <authorList>
            <person name="Haraga A."/>
            <person name="Miller S.I."/>
        </authorList>
    </citation>
    <scope>FUNCTION</scope>
    <scope>SUBCELLULAR LOCATION</scope>
</reference>
<reference key="5">
    <citation type="journal article" date="2006" name="Cell. Microbiol.">
        <title>A Salmonella type III secretion effector interacts with the mammalian serine/threonine protein kinase PKN1.</title>
        <authorList>
            <person name="Haraga A."/>
            <person name="Miller S.I."/>
        </authorList>
    </citation>
    <scope>FUNCTION</scope>
    <scope>SUBUNIT</scope>
    <scope>INTERACTION WITH HOST PKN1</scope>
    <scope>DOMAIN</scope>
</reference>
<reference key="6">
    <citation type="journal article" date="2007" name="Cell Host Microbe">
        <title>Type III secretion effectors of the IpaH family are E3 ubiquitin ligases.</title>
        <authorList>
            <person name="Rohde J.R."/>
            <person name="Breitkreutz A."/>
            <person name="Chenal A."/>
            <person name="Sansonetti P.J."/>
            <person name="Parsot C."/>
        </authorList>
    </citation>
    <scope>FUNCTION AS AN UBIQUITIN LIGASE</scope>
    <source>
        <strain>ATCC 14028 / SGSC 2980 / CDC 6516-60 / NCTC 12023</strain>
    </source>
</reference>
<reference key="7">
    <citation type="journal article" date="2014" name="Mol. Cell. Biol.">
        <title>Structure of an SspH1-PKN1 complex reveals the basis for host substrate recognition and mechanism of activation for a bacterial E3 ubiquitin ligase.</title>
        <authorList>
            <person name="Keszei A.F."/>
            <person name="Tang X."/>
            <person name="McCormick C."/>
            <person name="Zeqiraj E."/>
            <person name="Rohde J.R."/>
            <person name="Tyers M."/>
            <person name="Sicheri F."/>
        </authorList>
    </citation>
    <scope>X-RAY CRYSTALLOGRAPHY (2.75 ANGSTROMS) OF 161-398 IN COMPLEX WITH HUMAN PKN1</scope>
    <scope>INTERACTION WITH HOST PKN1</scope>
    <scope>FUNCTION</scope>
    <scope>SUBUNIT</scope>
    <scope>DOMAIN</scope>
    <scope>MUTAGENESIS OF TYR-325; ASP-343; TYR-366; ASP-368 AND CYS-492</scope>
    <scope>ACTIVE SITE</scope>
    <scope>ACTIVITY REGULATION</scope>
</reference>
<gene>
    <name type="primary">sspH1</name>
    <name type="ordered locus">STM14_1483</name>
</gene>
<sequence length="700" mass="77119">MFNIRNTQPSVSMQAIAGAAAPEASPEEIVWEKIQVFFPQENYEEAQQCLAELCHPARGMLPDHISSQFARLKALTFPAWEENIQCNRDGINQFCILDAGSKEILSITLDDAGNYTVNCQGYSEAHDFIMDTEPGEECTEFAEGASGTSLRPATTVSQKAAEYDAVWSKWERDAPAGESPGRAAVVQEMRDCLNNGNPVLNVGASGLTTLPDRLPPHITTLVIPDNNLTSLPELPEGLRELEVSGNLQLTSLPSLPQGLQKLWAYNNWLASLPTLPPGLGDLAVSNNQLTSLPEMPPALRELRVSGNNLTSLPALPSGLQKLWAYNNRLTSLPEMSPGLQELDVSHNQLTRLPQSLTGLSSAARVYLDGNPLSVRTLQALRDIIGHSGIRIHFDMAGPSVPREARALHLAVADWLTSAREGEAAQADRWQAFGLEDNAAAFSLVLDRLRETENFKKDAGFKAQISSWLTQLAEDAALRAKTFAMATEATSTCEDRVTHALHQMNNVQLVHNAEKGEYDNNLQGLVSTGREMFRLATLEQIAREKAGTLALVDDVEVYLAFQNKLKESLELTSVTSEMRFFDVSGVTVSDLQAAELQVKTAENSGFSKWILQWGPLHSVLERKVPERFNALREKQISDYEDTYRKLYDEVLKSSGLVDDTDAERTIGVSAMDSAKKEFLDGLRALVDEVLGSYLTARWRLN</sequence>
<evidence type="ECO:0000250" key="1"/>
<evidence type="ECO:0000250" key="2">
    <source>
        <dbReference type="UniProtKB" id="D0ZPH9"/>
    </source>
</evidence>
<evidence type="ECO:0000255" key="3">
    <source>
        <dbReference type="PROSITE-ProRule" id="PRU01398"/>
    </source>
</evidence>
<evidence type="ECO:0000269" key="4">
    <source>
    </source>
</evidence>
<evidence type="ECO:0000269" key="5">
    <source>
    </source>
</evidence>
<evidence type="ECO:0000269" key="6">
    <source>
    </source>
</evidence>
<evidence type="ECO:0000269" key="7">
    <source>
    </source>
</evidence>
<evidence type="ECO:0000269" key="8">
    <source>
    </source>
</evidence>
<evidence type="ECO:0000269" key="9">
    <source>
    </source>
</evidence>
<evidence type="ECO:0000305" key="10"/>
<evidence type="ECO:0007829" key="11">
    <source>
        <dbReference type="PDB" id="4NKH"/>
    </source>
</evidence>
<feature type="chain" id="PRO_0000391757" description="E3 ubiquitin-protein ligase SspH1">
    <location>
        <begin position="1"/>
        <end position="700"/>
    </location>
</feature>
<feature type="repeat" description="LRR 1">
    <location>
        <begin position="217"/>
        <end position="238"/>
    </location>
</feature>
<feature type="repeat" description="LRR 2">
    <location>
        <begin position="239"/>
        <end position="257"/>
    </location>
</feature>
<feature type="repeat" description="LRR 3">
    <location>
        <begin position="258"/>
        <end position="279"/>
    </location>
</feature>
<feature type="repeat" description="LRR 4">
    <location>
        <begin position="280"/>
        <end position="297"/>
    </location>
</feature>
<feature type="repeat" description="LRR 5">
    <location>
        <begin position="298"/>
        <end position="319"/>
    </location>
</feature>
<feature type="repeat" description="LRR 6">
    <location>
        <begin position="320"/>
        <end position="337"/>
    </location>
</feature>
<feature type="repeat" description="LRR 7">
    <location>
        <begin position="338"/>
        <end position="360"/>
    </location>
</feature>
<feature type="repeat" description="LRR 8">
    <location>
        <begin position="361"/>
        <end position="381"/>
    </location>
</feature>
<feature type="domain" description="NEL" evidence="3">
    <location>
        <begin position="406"/>
        <end position="700"/>
    </location>
</feature>
<feature type="region of interest" description="Interaction with target proteins">
    <location>
        <begin position="1"/>
        <end position="395"/>
    </location>
</feature>
<feature type="region of interest" description="Linker" evidence="1">
    <location>
        <begin position="396"/>
        <end position="403"/>
    </location>
</feature>
<feature type="region of interest" description="E3 ubiquitin-protein ligase catalytic domain">
    <location>
        <begin position="404"/>
        <end position="700"/>
    </location>
</feature>
<feature type="active site" description="Glycyl thioester intermediate" evidence="3 9">
    <location>
        <position position="492"/>
    </location>
</feature>
<feature type="mutagenesis site" description="Abolishes interaction with host PKN1 and PKN1-mediated release from the autoinhibited state." evidence="9">
    <original>Y</original>
    <variation>A</variation>
    <location>
        <position position="325"/>
    </location>
</feature>
<feature type="mutagenesis site" description="Abolishes interaction with host PKN1 and PKN1-mediated release from the autoinhibited state." evidence="9">
    <original>D</original>
    <variation>A</variation>
    <location>
        <position position="343"/>
    </location>
</feature>
<feature type="mutagenesis site" description="Abolishes interaction with host PKN1 and PKN1-mediated release from the autoinhibited state." evidence="9">
    <original>Y</original>
    <variation>A</variation>
    <location>
        <position position="366"/>
    </location>
</feature>
<feature type="mutagenesis site" description="Decreases interaction with host PKN1." evidence="9">
    <original>D</original>
    <variation>A</variation>
    <location>
        <position position="368"/>
    </location>
</feature>
<feature type="mutagenesis site" description="Abolishes ubiquitination and subsequent proteasomal degradation of host PKN1." evidence="9">
    <original>C</original>
    <variation>A</variation>
    <location>
        <position position="492"/>
    </location>
</feature>
<feature type="helix" evidence="11">
    <location>
        <begin position="163"/>
        <end position="172"/>
    </location>
</feature>
<feature type="helix" evidence="11">
    <location>
        <begin position="179"/>
        <end position="195"/>
    </location>
</feature>
<feature type="strand" evidence="11">
    <location>
        <begin position="199"/>
        <end position="201"/>
    </location>
</feature>
<feature type="strand" evidence="11">
    <location>
        <begin position="219"/>
        <end position="223"/>
    </location>
</feature>
<feature type="strand" evidence="11">
    <location>
        <begin position="240"/>
        <end position="243"/>
    </location>
</feature>
<feature type="strand" evidence="11">
    <location>
        <begin position="261"/>
        <end position="263"/>
    </location>
</feature>
<feature type="strand" evidence="11">
    <location>
        <begin position="281"/>
        <end position="283"/>
    </location>
</feature>
<feature type="strand" evidence="11">
    <location>
        <begin position="301"/>
        <end position="303"/>
    </location>
</feature>
<feature type="strand" evidence="11">
    <location>
        <begin position="321"/>
        <end position="323"/>
    </location>
</feature>
<feature type="strand" evidence="11">
    <location>
        <begin position="341"/>
        <end position="343"/>
    </location>
</feature>
<feature type="helix" evidence="11">
    <location>
        <begin position="354"/>
        <end position="358"/>
    </location>
</feature>
<feature type="strand" evidence="11">
    <location>
        <begin position="364"/>
        <end position="366"/>
    </location>
</feature>
<feature type="helix" evidence="11">
    <location>
        <begin position="374"/>
        <end position="387"/>
    </location>
</feature>
<feature type="strand" evidence="11">
    <location>
        <begin position="390"/>
        <end position="392"/>
    </location>
</feature>
<keyword id="KW-0002">3D-structure</keyword>
<keyword id="KW-1035">Host cytoplasm</keyword>
<keyword id="KW-1048">Host nucleus</keyword>
<keyword id="KW-0433">Leucine-rich repeat</keyword>
<keyword id="KW-0677">Repeat</keyword>
<keyword id="KW-0964">Secreted</keyword>
<keyword id="KW-0808">Transferase</keyword>
<keyword id="KW-0832">Ubl conjugation</keyword>
<keyword id="KW-0833">Ubl conjugation pathway</keyword>
<keyword id="KW-0843">Virulence</keyword>
<name>SSPH1_SALT1</name>
<organism>
    <name type="scientific">Salmonella typhimurium (strain 14028s / SGSC 2262)</name>
    <dbReference type="NCBI Taxonomy" id="588858"/>
    <lineage>
        <taxon>Bacteria</taxon>
        <taxon>Pseudomonadati</taxon>
        <taxon>Pseudomonadota</taxon>
        <taxon>Gammaproteobacteria</taxon>
        <taxon>Enterobacterales</taxon>
        <taxon>Enterobacteriaceae</taxon>
        <taxon>Salmonella</taxon>
    </lineage>
</organism>
<dbReference type="EC" id="2.3.2.27" evidence="9"/>
<dbReference type="EMBL" id="AF013776">
    <property type="protein sequence ID" value="AAD40326.1"/>
    <property type="molecule type" value="Genomic_DNA"/>
</dbReference>
<dbReference type="EMBL" id="CP001363">
    <property type="protein sequence ID" value="ACY87967.1"/>
    <property type="molecule type" value="Genomic_DNA"/>
</dbReference>
<dbReference type="RefSeq" id="WP_000481981.1">
    <property type="nucleotide sequence ID" value="NZ_CP043402.1"/>
</dbReference>
<dbReference type="PDB" id="4NKG">
    <property type="method" value="X-ray"/>
    <property type="resolution" value="2.90 A"/>
    <property type="chains" value="A/C=161-405"/>
</dbReference>
<dbReference type="PDB" id="4NKH">
    <property type="method" value="X-ray"/>
    <property type="resolution" value="2.75 A"/>
    <property type="chains" value="A/B/C/D/E/F=161-398"/>
</dbReference>
<dbReference type="PDBsum" id="4NKG"/>
<dbReference type="PDBsum" id="4NKH"/>
<dbReference type="SMR" id="D0ZVG2"/>
<dbReference type="IntAct" id="D0ZVG2">
    <property type="interactions" value="12"/>
</dbReference>
<dbReference type="MINT" id="D0ZVG2"/>
<dbReference type="KEGG" id="seo:STM14_1483"/>
<dbReference type="PATRIC" id="fig|588858.6.peg.1452"/>
<dbReference type="HOGENOM" id="CLU_018533_1_0_6"/>
<dbReference type="BioCyc" id="SENT588858:STM14_RS07010-MONOMER"/>
<dbReference type="EvolutionaryTrace" id="D0ZVG2"/>
<dbReference type="PHI-base" id="PHI:3748"/>
<dbReference type="Proteomes" id="UP000002695">
    <property type="component" value="Chromosome"/>
</dbReference>
<dbReference type="GO" id="GO:0005576">
    <property type="term" value="C:extracellular region"/>
    <property type="evidence" value="ECO:0007669"/>
    <property type="project" value="UniProtKB-SubCell"/>
</dbReference>
<dbReference type="GO" id="GO:0030430">
    <property type="term" value="C:host cell cytoplasm"/>
    <property type="evidence" value="ECO:0007669"/>
    <property type="project" value="UniProtKB-SubCell"/>
</dbReference>
<dbReference type="GO" id="GO:0042025">
    <property type="term" value="C:host cell nucleus"/>
    <property type="evidence" value="ECO:0000314"/>
    <property type="project" value="UniProtKB"/>
</dbReference>
<dbReference type="GO" id="GO:0004842">
    <property type="term" value="F:ubiquitin-protein transferase activity"/>
    <property type="evidence" value="ECO:0000314"/>
    <property type="project" value="UniProtKB"/>
</dbReference>
<dbReference type="GO" id="GO:0030254">
    <property type="term" value="P:protein secretion by the type III secretion system"/>
    <property type="evidence" value="ECO:0000314"/>
    <property type="project" value="UniProtKB"/>
</dbReference>
<dbReference type="GO" id="GO:0016567">
    <property type="term" value="P:protein ubiquitination"/>
    <property type="evidence" value="ECO:0000314"/>
    <property type="project" value="UniProtKB"/>
</dbReference>
<dbReference type="FunFam" id="1.20.58.360:FF:000001">
    <property type="entry name" value="Probable E3 ubiquitin-protein ligase ipaH7.8"/>
    <property type="match status" value="1"/>
</dbReference>
<dbReference type="Gene3D" id="1.20.58.90">
    <property type="match status" value="1"/>
</dbReference>
<dbReference type="Gene3D" id="3.80.10.10">
    <property type="entry name" value="Ribonuclease Inhibitor"/>
    <property type="match status" value="1"/>
</dbReference>
<dbReference type="Gene3D" id="3.30.2440.10">
    <property type="entry name" value="Secreted effector protein SifA"/>
    <property type="match status" value="1"/>
</dbReference>
<dbReference type="Gene3D" id="1.20.58.360">
    <property type="entry name" value="Shigella T3SS effector IpaH defines"/>
    <property type="match status" value="1"/>
</dbReference>
<dbReference type="Gene3D" id="1.20.1270.130">
    <property type="entry name" value="Shigella T3SS effector IpaH domain"/>
    <property type="match status" value="1"/>
</dbReference>
<dbReference type="InterPro" id="IPR001611">
    <property type="entry name" value="Leu-rich_rpt"/>
</dbReference>
<dbReference type="InterPro" id="IPR051071">
    <property type="entry name" value="LRR-bact_E3_ubiq_ligases"/>
</dbReference>
<dbReference type="InterPro" id="IPR032675">
    <property type="entry name" value="LRR_dom_sf"/>
</dbReference>
<dbReference type="InterPro" id="IPR029487">
    <property type="entry name" value="NEL_dom"/>
</dbReference>
<dbReference type="PANTHER" id="PTHR47114">
    <property type="match status" value="1"/>
</dbReference>
<dbReference type="PANTHER" id="PTHR47114:SF2">
    <property type="entry name" value="OLIGODENDROCYTE-MYELIN GLYCOPROTEIN"/>
    <property type="match status" value="1"/>
</dbReference>
<dbReference type="Pfam" id="PF00560">
    <property type="entry name" value="LRR_1"/>
    <property type="match status" value="1"/>
</dbReference>
<dbReference type="Pfam" id="PF14496">
    <property type="entry name" value="NEL"/>
    <property type="match status" value="1"/>
</dbReference>
<dbReference type="SMART" id="SM00364">
    <property type="entry name" value="LRR_BAC"/>
    <property type="match status" value="7"/>
</dbReference>
<dbReference type="SUPFAM" id="SSF52058">
    <property type="entry name" value="L domain-like"/>
    <property type="match status" value="1"/>
</dbReference>
<dbReference type="PROSITE" id="PS51450">
    <property type="entry name" value="LRR"/>
    <property type="match status" value="4"/>
</dbReference>
<dbReference type="PROSITE" id="PS52053">
    <property type="entry name" value="NEL"/>
    <property type="match status" value="1"/>
</dbReference>